<proteinExistence type="inferred from homology"/>
<feature type="chain" id="PRO_0000352082" description="Small ribosomal subunit protein uS2">
    <location>
        <begin position="1"/>
        <end position="206"/>
    </location>
</feature>
<reference key="1">
    <citation type="submission" date="2008-03" db="EMBL/GenBank/DDBJ databases">
        <title>Complete sequence of Thermoproteus neutrophilus V24Sta.</title>
        <authorList>
            <consortium name="US DOE Joint Genome Institute"/>
            <person name="Copeland A."/>
            <person name="Lucas S."/>
            <person name="Lapidus A."/>
            <person name="Glavina del Rio T."/>
            <person name="Dalin E."/>
            <person name="Tice H."/>
            <person name="Bruce D."/>
            <person name="Goodwin L."/>
            <person name="Pitluck S."/>
            <person name="Sims D."/>
            <person name="Brettin T."/>
            <person name="Detter J.C."/>
            <person name="Han C."/>
            <person name="Kuske C.R."/>
            <person name="Schmutz J."/>
            <person name="Larimer F."/>
            <person name="Land M."/>
            <person name="Hauser L."/>
            <person name="Kyrpides N."/>
            <person name="Mikhailova N."/>
            <person name="Biddle J.F."/>
            <person name="Zhang Z."/>
            <person name="Fitz-Gibbon S.T."/>
            <person name="Lowe T.M."/>
            <person name="Saltikov C."/>
            <person name="House C.H."/>
            <person name="Richardson P."/>
        </authorList>
    </citation>
    <scope>NUCLEOTIDE SEQUENCE [LARGE SCALE GENOMIC DNA]</scope>
    <source>
        <strain>DSM 2338 / JCM 9278 / NBRC 100436 / V24Sta</strain>
    </source>
</reference>
<gene>
    <name evidence="1" type="primary">rps2</name>
    <name type="ordered locus">Tneu_0058</name>
</gene>
<name>RS2_PYRNV</name>
<dbReference type="EMBL" id="CP001014">
    <property type="protein sequence ID" value="ACB39016.1"/>
    <property type="molecule type" value="Genomic_DNA"/>
</dbReference>
<dbReference type="RefSeq" id="WP_012349437.1">
    <property type="nucleotide sequence ID" value="NC_010525.1"/>
</dbReference>
<dbReference type="SMR" id="B1YA42"/>
<dbReference type="STRING" id="444157.Tneu_0058"/>
<dbReference type="GeneID" id="6164685"/>
<dbReference type="KEGG" id="tne:Tneu_0058"/>
<dbReference type="eggNOG" id="arCOG04245">
    <property type="taxonomic scope" value="Archaea"/>
</dbReference>
<dbReference type="HOGENOM" id="CLU_058171_3_0_2"/>
<dbReference type="OrthoDB" id="371797at2157"/>
<dbReference type="Proteomes" id="UP000001694">
    <property type="component" value="Chromosome"/>
</dbReference>
<dbReference type="GO" id="GO:0015935">
    <property type="term" value="C:small ribosomal subunit"/>
    <property type="evidence" value="ECO:0007669"/>
    <property type="project" value="InterPro"/>
</dbReference>
<dbReference type="GO" id="GO:0003735">
    <property type="term" value="F:structural constituent of ribosome"/>
    <property type="evidence" value="ECO:0007669"/>
    <property type="project" value="InterPro"/>
</dbReference>
<dbReference type="GO" id="GO:0006412">
    <property type="term" value="P:translation"/>
    <property type="evidence" value="ECO:0007669"/>
    <property type="project" value="UniProtKB-UniRule"/>
</dbReference>
<dbReference type="CDD" id="cd01425">
    <property type="entry name" value="RPS2"/>
    <property type="match status" value="1"/>
</dbReference>
<dbReference type="FunFam" id="3.40.50.10490:FF:000030">
    <property type="entry name" value="30S ribosomal protein S2"/>
    <property type="match status" value="1"/>
</dbReference>
<dbReference type="Gene3D" id="3.40.50.10490">
    <property type="entry name" value="Glucose-6-phosphate isomerase like protein, domain 1"/>
    <property type="match status" value="1"/>
</dbReference>
<dbReference type="HAMAP" id="MF_00291_A">
    <property type="entry name" value="Ribosomal_uS2_A"/>
    <property type="match status" value="1"/>
</dbReference>
<dbReference type="InterPro" id="IPR001865">
    <property type="entry name" value="Ribosomal_uS2"/>
</dbReference>
<dbReference type="InterPro" id="IPR023454">
    <property type="entry name" value="Ribosomal_uS2_arc"/>
</dbReference>
<dbReference type="InterPro" id="IPR005707">
    <property type="entry name" value="Ribosomal_uS2_euk/arc"/>
</dbReference>
<dbReference type="InterPro" id="IPR023591">
    <property type="entry name" value="Ribosomal_uS2_flav_dom_sf"/>
</dbReference>
<dbReference type="NCBIfam" id="TIGR01012">
    <property type="entry name" value="uS2_euk_arch"/>
    <property type="match status" value="1"/>
</dbReference>
<dbReference type="PANTHER" id="PTHR11489">
    <property type="entry name" value="40S RIBOSOMAL PROTEIN SA"/>
    <property type="match status" value="1"/>
</dbReference>
<dbReference type="Pfam" id="PF00318">
    <property type="entry name" value="Ribosomal_S2"/>
    <property type="match status" value="1"/>
</dbReference>
<dbReference type="PRINTS" id="PR00395">
    <property type="entry name" value="RIBOSOMALS2"/>
</dbReference>
<dbReference type="SUPFAM" id="SSF52313">
    <property type="entry name" value="Ribosomal protein S2"/>
    <property type="match status" value="1"/>
</dbReference>
<organism>
    <name type="scientific">Pyrobaculum neutrophilum (strain DSM 2338 / JCM 9278 / NBRC 100436 / V24Sta)</name>
    <name type="common">Thermoproteus neutrophilus</name>
    <dbReference type="NCBI Taxonomy" id="444157"/>
    <lineage>
        <taxon>Archaea</taxon>
        <taxon>Thermoproteota</taxon>
        <taxon>Thermoprotei</taxon>
        <taxon>Thermoproteales</taxon>
        <taxon>Thermoproteaceae</taxon>
        <taxon>Pyrobaculum</taxon>
    </lineage>
</organism>
<accession>B1YA42</accession>
<protein>
    <recommendedName>
        <fullName evidence="1">Small ribosomal subunit protein uS2</fullName>
    </recommendedName>
    <alternativeName>
        <fullName evidence="2">30S ribosomal protein S2</fullName>
    </alternativeName>
</protein>
<comment type="similarity">
    <text evidence="1">Belongs to the universal ribosomal protein uS2 family.</text>
</comment>
<keyword id="KW-0687">Ribonucleoprotein</keyword>
<keyword id="KW-0689">Ribosomal protein</keyword>
<evidence type="ECO:0000255" key="1">
    <source>
        <dbReference type="HAMAP-Rule" id="MF_00291"/>
    </source>
</evidence>
<evidence type="ECO:0000305" key="2"/>
<sequence length="206" mass="23600">MAEEAYEYLVPLEKYLSAGVRLGTRLSNRYLEERGFIFAVRPDGLRIFDIKKIDERLKIAAKFIARYPPDRVLVHTTRPYGFKPVQMFCKFVGCRALTGRFIPGTLTNPNLPHYQEVDLLFVVDPKLDAQAVTEAAKMGIPVVALVDTDTPHQYIDLMVPCNNKGRKSLALIFWILARQILRERGELKPDQDLPVPPEEFETRLVQ</sequence>